<protein>
    <recommendedName>
        <fullName evidence="1">Glutamate-1-semialdehyde 2,1-aminomutase 2</fullName>
        <shortName evidence="1">GSA 2</shortName>
        <ecNumber evidence="1">5.4.3.8</ecNumber>
    </recommendedName>
    <alternativeName>
        <fullName evidence="1">Glutamate-1-semialdehyde aminotransferase 2</fullName>
        <shortName evidence="1">GSA-AT 2</shortName>
    </alternativeName>
</protein>
<feature type="chain" id="PRO_0000382280" description="Glutamate-1-semialdehyde 2,1-aminomutase 2">
    <location>
        <begin position="1"/>
        <end position="429"/>
    </location>
</feature>
<feature type="modified residue" description="N6-(pyridoxal phosphate)lysine" evidence="1">
    <location>
        <position position="268"/>
    </location>
</feature>
<gene>
    <name evidence="1" type="primary">hemL2</name>
    <name type="ordered locus">BALH_4054</name>
</gene>
<proteinExistence type="inferred from homology"/>
<dbReference type="EC" id="5.4.3.8" evidence="1"/>
<dbReference type="EMBL" id="CP000485">
    <property type="protein sequence ID" value="ABK87271.1"/>
    <property type="molecule type" value="Genomic_DNA"/>
</dbReference>
<dbReference type="SMR" id="A0RJ78"/>
<dbReference type="KEGG" id="btl:BALH_4054"/>
<dbReference type="HOGENOM" id="CLU_016922_1_5_9"/>
<dbReference type="UniPathway" id="UPA00251">
    <property type="reaction ID" value="UER00317"/>
</dbReference>
<dbReference type="GO" id="GO:0005737">
    <property type="term" value="C:cytoplasm"/>
    <property type="evidence" value="ECO:0007669"/>
    <property type="project" value="UniProtKB-SubCell"/>
</dbReference>
<dbReference type="GO" id="GO:0042286">
    <property type="term" value="F:glutamate-1-semialdehyde 2,1-aminomutase activity"/>
    <property type="evidence" value="ECO:0007669"/>
    <property type="project" value="UniProtKB-UniRule"/>
</dbReference>
<dbReference type="GO" id="GO:0030170">
    <property type="term" value="F:pyridoxal phosphate binding"/>
    <property type="evidence" value="ECO:0007669"/>
    <property type="project" value="InterPro"/>
</dbReference>
<dbReference type="GO" id="GO:0008483">
    <property type="term" value="F:transaminase activity"/>
    <property type="evidence" value="ECO:0007669"/>
    <property type="project" value="InterPro"/>
</dbReference>
<dbReference type="GO" id="GO:0006782">
    <property type="term" value="P:protoporphyrinogen IX biosynthetic process"/>
    <property type="evidence" value="ECO:0007669"/>
    <property type="project" value="UniProtKB-UniRule"/>
</dbReference>
<dbReference type="CDD" id="cd00610">
    <property type="entry name" value="OAT_like"/>
    <property type="match status" value="1"/>
</dbReference>
<dbReference type="FunFam" id="3.40.640.10:FF:000021">
    <property type="entry name" value="Glutamate-1-semialdehyde 2,1-aminomutase"/>
    <property type="match status" value="1"/>
</dbReference>
<dbReference type="Gene3D" id="3.90.1150.10">
    <property type="entry name" value="Aspartate Aminotransferase, domain 1"/>
    <property type="match status" value="1"/>
</dbReference>
<dbReference type="Gene3D" id="3.40.640.10">
    <property type="entry name" value="Type I PLP-dependent aspartate aminotransferase-like (Major domain)"/>
    <property type="match status" value="1"/>
</dbReference>
<dbReference type="HAMAP" id="MF_00375">
    <property type="entry name" value="HemL_aminotrans_3"/>
    <property type="match status" value="1"/>
</dbReference>
<dbReference type="InterPro" id="IPR004639">
    <property type="entry name" value="4pyrrol_synth_GluAld_NH2Trfase"/>
</dbReference>
<dbReference type="InterPro" id="IPR005814">
    <property type="entry name" value="Aminotrans_3"/>
</dbReference>
<dbReference type="InterPro" id="IPR049704">
    <property type="entry name" value="Aminotrans_3_PPA_site"/>
</dbReference>
<dbReference type="InterPro" id="IPR015424">
    <property type="entry name" value="PyrdxlP-dep_Trfase"/>
</dbReference>
<dbReference type="InterPro" id="IPR015421">
    <property type="entry name" value="PyrdxlP-dep_Trfase_major"/>
</dbReference>
<dbReference type="InterPro" id="IPR015422">
    <property type="entry name" value="PyrdxlP-dep_Trfase_small"/>
</dbReference>
<dbReference type="NCBIfam" id="TIGR00713">
    <property type="entry name" value="hemL"/>
    <property type="match status" value="1"/>
</dbReference>
<dbReference type="NCBIfam" id="NF000818">
    <property type="entry name" value="PRK00062.1"/>
    <property type="match status" value="1"/>
</dbReference>
<dbReference type="PANTHER" id="PTHR43713">
    <property type="entry name" value="GLUTAMATE-1-SEMIALDEHYDE 2,1-AMINOMUTASE"/>
    <property type="match status" value="1"/>
</dbReference>
<dbReference type="PANTHER" id="PTHR43713:SF3">
    <property type="entry name" value="GLUTAMATE-1-SEMIALDEHYDE 2,1-AMINOMUTASE 1, CHLOROPLASTIC-RELATED"/>
    <property type="match status" value="1"/>
</dbReference>
<dbReference type="Pfam" id="PF00202">
    <property type="entry name" value="Aminotran_3"/>
    <property type="match status" value="1"/>
</dbReference>
<dbReference type="SUPFAM" id="SSF53383">
    <property type="entry name" value="PLP-dependent transferases"/>
    <property type="match status" value="1"/>
</dbReference>
<dbReference type="PROSITE" id="PS00600">
    <property type="entry name" value="AA_TRANSFER_CLASS_3"/>
    <property type="match status" value="1"/>
</dbReference>
<comment type="catalytic activity">
    <reaction evidence="1">
        <text>(S)-4-amino-5-oxopentanoate = 5-aminolevulinate</text>
        <dbReference type="Rhea" id="RHEA:14265"/>
        <dbReference type="ChEBI" id="CHEBI:57501"/>
        <dbReference type="ChEBI" id="CHEBI:356416"/>
        <dbReference type="EC" id="5.4.3.8"/>
    </reaction>
</comment>
<comment type="cofactor">
    <cofactor evidence="1">
        <name>pyridoxal 5'-phosphate</name>
        <dbReference type="ChEBI" id="CHEBI:597326"/>
    </cofactor>
</comment>
<comment type="pathway">
    <text evidence="1">Porphyrin-containing compound metabolism; protoporphyrin-IX biosynthesis; 5-aminolevulinate from L-glutamyl-tRNA(Glu): step 2/2.</text>
</comment>
<comment type="subunit">
    <text evidence="1">Homodimer.</text>
</comment>
<comment type="subcellular location">
    <subcellularLocation>
        <location evidence="1">Cytoplasm</location>
    </subcellularLocation>
</comment>
<comment type="similarity">
    <text evidence="1">Belongs to the class-III pyridoxal-phosphate-dependent aminotransferase family. HemL subfamily.</text>
</comment>
<evidence type="ECO:0000255" key="1">
    <source>
        <dbReference type="HAMAP-Rule" id="MF_00375"/>
    </source>
</evidence>
<sequence>MKKFDKSIAAFEEAQDLMPGGVNSPVRAFKSVGMNPLFMERGKGSKVYDIDGNEYIDYVLSWGPLIHGHANDRVVEALKAVAERGTSFGAPTEIENKLAKLVIERVPSIEIVRMVNSGTEATMSALRLARGYTGRNKILKFIGCYHGHGDSLLIKAGSGVATLGLPDSPGVPEGVAKNTITVAYNDLESVKYAFEQFGDDIACVIVEPVAGNMGVVPPQPGFLEGLREVTEQNGALLIFDEVMTGFRVAYNCGQGYYGVTPDLTCLGKVIGGGLPVGAYGGKAEIMRQVAPSGPIYQAGTLSGNPLAMAAGYETLVQLTPESYVEFERKAEMLEAGLRKAAEKHGIPHHINRAGSMIGIFFTDEPVINYDAAKSSNLQFFAAYYREMVEQGVFLPPSQFEGLFLSTAHSDADIEATIAAAEIAMSKLKA</sequence>
<reference key="1">
    <citation type="journal article" date="2007" name="J. Bacteriol.">
        <title>The complete genome sequence of Bacillus thuringiensis Al Hakam.</title>
        <authorList>
            <person name="Challacombe J.F."/>
            <person name="Altherr M.R."/>
            <person name="Xie G."/>
            <person name="Bhotika S.S."/>
            <person name="Brown N."/>
            <person name="Bruce D."/>
            <person name="Campbell C.S."/>
            <person name="Campbell M.L."/>
            <person name="Chen J."/>
            <person name="Chertkov O."/>
            <person name="Cleland C."/>
            <person name="Dimitrijevic M."/>
            <person name="Doggett N.A."/>
            <person name="Fawcett J.J."/>
            <person name="Glavina T."/>
            <person name="Goodwin L.A."/>
            <person name="Green L.D."/>
            <person name="Han C.S."/>
            <person name="Hill K.K."/>
            <person name="Hitchcock P."/>
            <person name="Jackson P.J."/>
            <person name="Keim P."/>
            <person name="Kewalramani A.R."/>
            <person name="Longmire J."/>
            <person name="Lucas S."/>
            <person name="Malfatti S."/>
            <person name="Martinez D."/>
            <person name="McMurry K."/>
            <person name="Meincke L.J."/>
            <person name="Misra M."/>
            <person name="Moseman B.L."/>
            <person name="Mundt M."/>
            <person name="Munk A.C."/>
            <person name="Okinaka R.T."/>
            <person name="Parson-Quintana B."/>
            <person name="Reilly L.P."/>
            <person name="Richardson P."/>
            <person name="Robinson D.L."/>
            <person name="Saunders E."/>
            <person name="Tapia R."/>
            <person name="Tesmer J.G."/>
            <person name="Thayer N."/>
            <person name="Thompson L.S."/>
            <person name="Tice H."/>
            <person name="Ticknor L.O."/>
            <person name="Wills P.L."/>
            <person name="Gilna P."/>
            <person name="Brettin T.S."/>
        </authorList>
    </citation>
    <scope>NUCLEOTIDE SEQUENCE [LARGE SCALE GENOMIC DNA]</scope>
    <source>
        <strain>Al Hakam</strain>
    </source>
</reference>
<name>GSA2_BACAH</name>
<accession>A0RJ78</accession>
<keyword id="KW-0963">Cytoplasm</keyword>
<keyword id="KW-0413">Isomerase</keyword>
<keyword id="KW-0627">Porphyrin biosynthesis</keyword>
<keyword id="KW-0663">Pyridoxal phosphate</keyword>
<organism>
    <name type="scientific">Bacillus thuringiensis (strain Al Hakam)</name>
    <dbReference type="NCBI Taxonomy" id="412694"/>
    <lineage>
        <taxon>Bacteria</taxon>
        <taxon>Bacillati</taxon>
        <taxon>Bacillota</taxon>
        <taxon>Bacilli</taxon>
        <taxon>Bacillales</taxon>
        <taxon>Bacillaceae</taxon>
        <taxon>Bacillus</taxon>
        <taxon>Bacillus cereus group</taxon>
    </lineage>
</organism>